<feature type="chain" id="PRO_1000125016" description="Nucleoside diphosphate kinase">
    <location>
        <begin position="1"/>
        <end position="143"/>
    </location>
</feature>
<feature type="active site" description="Pros-phosphohistidine intermediate" evidence="1">
    <location>
        <position position="117"/>
    </location>
</feature>
<feature type="binding site" evidence="1">
    <location>
        <position position="11"/>
    </location>
    <ligand>
        <name>ATP</name>
        <dbReference type="ChEBI" id="CHEBI:30616"/>
    </ligand>
</feature>
<feature type="binding site" evidence="1">
    <location>
        <position position="59"/>
    </location>
    <ligand>
        <name>ATP</name>
        <dbReference type="ChEBI" id="CHEBI:30616"/>
    </ligand>
</feature>
<feature type="binding site" evidence="1">
    <location>
        <position position="87"/>
    </location>
    <ligand>
        <name>ATP</name>
        <dbReference type="ChEBI" id="CHEBI:30616"/>
    </ligand>
</feature>
<feature type="binding site" evidence="1">
    <location>
        <position position="93"/>
    </location>
    <ligand>
        <name>ATP</name>
        <dbReference type="ChEBI" id="CHEBI:30616"/>
    </ligand>
</feature>
<feature type="binding site" evidence="1">
    <location>
        <position position="104"/>
    </location>
    <ligand>
        <name>ATP</name>
        <dbReference type="ChEBI" id="CHEBI:30616"/>
    </ligand>
</feature>
<feature type="binding site" evidence="1">
    <location>
        <position position="114"/>
    </location>
    <ligand>
        <name>ATP</name>
        <dbReference type="ChEBI" id="CHEBI:30616"/>
    </ligand>
</feature>
<dbReference type="EC" id="2.7.4.6" evidence="1"/>
<dbReference type="EMBL" id="CP001127">
    <property type="protein sequence ID" value="ACF91040.1"/>
    <property type="molecule type" value="Genomic_DNA"/>
</dbReference>
<dbReference type="RefSeq" id="WP_000963846.1">
    <property type="nucleotide sequence ID" value="NC_011094.1"/>
</dbReference>
<dbReference type="SMR" id="B4TR98"/>
<dbReference type="KEGG" id="sew:SeSA_A2765"/>
<dbReference type="HOGENOM" id="CLU_060216_8_1_6"/>
<dbReference type="Proteomes" id="UP000001865">
    <property type="component" value="Chromosome"/>
</dbReference>
<dbReference type="GO" id="GO:0005737">
    <property type="term" value="C:cytoplasm"/>
    <property type="evidence" value="ECO:0007669"/>
    <property type="project" value="UniProtKB-SubCell"/>
</dbReference>
<dbReference type="GO" id="GO:0005524">
    <property type="term" value="F:ATP binding"/>
    <property type="evidence" value="ECO:0007669"/>
    <property type="project" value="UniProtKB-UniRule"/>
</dbReference>
<dbReference type="GO" id="GO:0046872">
    <property type="term" value="F:metal ion binding"/>
    <property type="evidence" value="ECO:0007669"/>
    <property type="project" value="UniProtKB-KW"/>
</dbReference>
<dbReference type="GO" id="GO:0004550">
    <property type="term" value="F:nucleoside diphosphate kinase activity"/>
    <property type="evidence" value="ECO:0007669"/>
    <property type="project" value="UniProtKB-UniRule"/>
</dbReference>
<dbReference type="GO" id="GO:0006241">
    <property type="term" value="P:CTP biosynthetic process"/>
    <property type="evidence" value="ECO:0007669"/>
    <property type="project" value="UniProtKB-UniRule"/>
</dbReference>
<dbReference type="GO" id="GO:0006183">
    <property type="term" value="P:GTP biosynthetic process"/>
    <property type="evidence" value="ECO:0007669"/>
    <property type="project" value="UniProtKB-UniRule"/>
</dbReference>
<dbReference type="GO" id="GO:0006228">
    <property type="term" value="P:UTP biosynthetic process"/>
    <property type="evidence" value="ECO:0007669"/>
    <property type="project" value="UniProtKB-UniRule"/>
</dbReference>
<dbReference type="CDD" id="cd04413">
    <property type="entry name" value="NDPk_I"/>
    <property type="match status" value="1"/>
</dbReference>
<dbReference type="FunFam" id="3.30.70.141:FF:000001">
    <property type="entry name" value="Nucleoside diphosphate kinase"/>
    <property type="match status" value="1"/>
</dbReference>
<dbReference type="Gene3D" id="3.30.70.141">
    <property type="entry name" value="Nucleoside diphosphate kinase-like domain"/>
    <property type="match status" value="1"/>
</dbReference>
<dbReference type="HAMAP" id="MF_00451">
    <property type="entry name" value="NDP_kinase"/>
    <property type="match status" value="1"/>
</dbReference>
<dbReference type="InterPro" id="IPR034907">
    <property type="entry name" value="NDK-like_dom"/>
</dbReference>
<dbReference type="InterPro" id="IPR036850">
    <property type="entry name" value="NDK-like_dom_sf"/>
</dbReference>
<dbReference type="InterPro" id="IPR001564">
    <property type="entry name" value="Nucleoside_diP_kinase"/>
</dbReference>
<dbReference type="InterPro" id="IPR023005">
    <property type="entry name" value="Nucleoside_diP_kinase_AS"/>
</dbReference>
<dbReference type="NCBIfam" id="NF001908">
    <property type="entry name" value="PRK00668.1"/>
    <property type="match status" value="1"/>
</dbReference>
<dbReference type="PANTHER" id="PTHR46161">
    <property type="entry name" value="NUCLEOSIDE DIPHOSPHATE KINASE"/>
    <property type="match status" value="1"/>
</dbReference>
<dbReference type="PANTHER" id="PTHR46161:SF3">
    <property type="entry name" value="NUCLEOSIDE DIPHOSPHATE KINASE DDB_G0292928-RELATED"/>
    <property type="match status" value="1"/>
</dbReference>
<dbReference type="Pfam" id="PF00334">
    <property type="entry name" value="NDK"/>
    <property type="match status" value="1"/>
</dbReference>
<dbReference type="PRINTS" id="PR01243">
    <property type="entry name" value="NUCDPKINASE"/>
</dbReference>
<dbReference type="SMART" id="SM00562">
    <property type="entry name" value="NDK"/>
    <property type="match status" value="1"/>
</dbReference>
<dbReference type="SUPFAM" id="SSF54919">
    <property type="entry name" value="Nucleoside diphosphate kinase, NDK"/>
    <property type="match status" value="1"/>
</dbReference>
<dbReference type="PROSITE" id="PS00469">
    <property type="entry name" value="NDPK"/>
    <property type="match status" value="1"/>
</dbReference>
<dbReference type="PROSITE" id="PS51374">
    <property type="entry name" value="NDPK_LIKE"/>
    <property type="match status" value="1"/>
</dbReference>
<proteinExistence type="inferred from homology"/>
<protein>
    <recommendedName>
        <fullName evidence="1">Nucleoside diphosphate kinase</fullName>
        <shortName evidence="1">NDK</shortName>
        <shortName evidence="1">NDP kinase</shortName>
        <ecNumber evidence="1">2.7.4.6</ecNumber>
    </recommendedName>
    <alternativeName>
        <fullName evidence="1">Nucleoside-2-P kinase</fullName>
    </alternativeName>
</protein>
<gene>
    <name evidence="1" type="primary">ndk</name>
    <name type="ordered locus">SeSA_A2765</name>
</gene>
<evidence type="ECO:0000255" key="1">
    <source>
        <dbReference type="HAMAP-Rule" id="MF_00451"/>
    </source>
</evidence>
<comment type="function">
    <text evidence="1">Major role in the synthesis of nucleoside triphosphates other than ATP. The ATP gamma phosphate is transferred to the NDP beta phosphate via a ping-pong mechanism, using a phosphorylated active-site intermediate.</text>
</comment>
<comment type="catalytic activity">
    <reaction evidence="1">
        <text>a 2'-deoxyribonucleoside 5'-diphosphate + ATP = a 2'-deoxyribonucleoside 5'-triphosphate + ADP</text>
        <dbReference type="Rhea" id="RHEA:44640"/>
        <dbReference type="ChEBI" id="CHEBI:30616"/>
        <dbReference type="ChEBI" id="CHEBI:61560"/>
        <dbReference type="ChEBI" id="CHEBI:73316"/>
        <dbReference type="ChEBI" id="CHEBI:456216"/>
        <dbReference type="EC" id="2.7.4.6"/>
    </reaction>
</comment>
<comment type="catalytic activity">
    <reaction evidence="1">
        <text>a ribonucleoside 5'-diphosphate + ATP = a ribonucleoside 5'-triphosphate + ADP</text>
        <dbReference type="Rhea" id="RHEA:18113"/>
        <dbReference type="ChEBI" id="CHEBI:30616"/>
        <dbReference type="ChEBI" id="CHEBI:57930"/>
        <dbReference type="ChEBI" id="CHEBI:61557"/>
        <dbReference type="ChEBI" id="CHEBI:456216"/>
        <dbReference type="EC" id="2.7.4.6"/>
    </reaction>
</comment>
<comment type="cofactor">
    <cofactor evidence="1">
        <name>Mg(2+)</name>
        <dbReference type="ChEBI" id="CHEBI:18420"/>
    </cofactor>
</comment>
<comment type="subunit">
    <text evidence="1">Homotetramer.</text>
</comment>
<comment type="subcellular location">
    <subcellularLocation>
        <location evidence="1">Cytoplasm</location>
    </subcellularLocation>
</comment>
<comment type="similarity">
    <text evidence="1">Belongs to the NDK family.</text>
</comment>
<accession>B4TR98</accession>
<organism>
    <name type="scientific">Salmonella schwarzengrund (strain CVM19633)</name>
    <dbReference type="NCBI Taxonomy" id="439843"/>
    <lineage>
        <taxon>Bacteria</taxon>
        <taxon>Pseudomonadati</taxon>
        <taxon>Pseudomonadota</taxon>
        <taxon>Gammaproteobacteria</taxon>
        <taxon>Enterobacterales</taxon>
        <taxon>Enterobacteriaceae</taxon>
        <taxon>Salmonella</taxon>
    </lineage>
</organism>
<reference key="1">
    <citation type="journal article" date="2011" name="J. Bacteriol.">
        <title>Comparative genomics of 28 Salmonella enterica isolates: evidence for CRISPR-mediated adaptive sublineage evolution.</title>
        <authorList>
            <person name="Fricke W.F."/>
            <person name="Mammel M.K."/>
            <person name="McDermott P.F."/>
            <person name="Tartera C."/>
            <person name="White D.G."/>
            <person name="Leclerc J.E."/>
            <person name="Ravel J."/>
            <person name="Cebula T.A."/>
        </authorList>
    </citation>
    <scope>NUCLEOTIDE SEQUENCE [LARGE SCALE GENOMIC DNA]</scope>
    <source>
        <strain>CVM19633</strain>
    </source>
</reference>
<name>NDK_SALSV</name>
<sequence>MAIERTFSIIKPNAVAKNVIGSIFARFEAAGFKIVGTKMLHLTVEQARGFYAEHDGKPFFDGLVEFMTSGPIVVSVLESENAVQRHRDLLGATNPANALAGTLRADYADSLTENGTHGSDSLESAQREIAFFFGEGEVCPRTR</sequence>
<keyword id="KW-0067">ATP-binding</keyword>
<keyword id="KW-0963">Cytoplasm</keyword>
<keyword id="KW-0418">Kinase</keyword>
<keyword id="KW-0460">Magnesium</keyword>
<keyword id="KW-0479">Metal-binding</keyword>
<keyword id="KW-0546">Nucleotide metabolism</keyword>
<keyword id="KW-0547">Nucleotide-binding</keyword>
<keyword id="KW-0597">Phosphoprotein</keyword>
<keyword id="KW-0808">Transferase</keyword>